<evidence type="ECO:0000250" key="1"/>
<evidence type="ECO:0000250" key="2">
    <source>
        <dbReference type="UniProtKB" id="P0A8G6"/>
    </source>
</evidence>
<evidence type="ECO:0000269" key="3">
    <source>
    </source>
</evidence>
<evidence type="ECO:0000269" key="4">
    <source ref="3"/>
</evidence>
<evidence type="ECO:0000303" key="5">
    <source>
    </source>
</evidence>
<evidence type="ECO:0000305" key="6"/>
<evidence type="ECO:0007744" key="7">
    <source>
        <dbReference type="PDB" id="4LA4"/>
    </source>
</evidence>
<evidence type="ECO:0007744" key="8">
    <source>
        <dbReference type="PDB" id="4LAF"/>
    </source>
</evidence>
<evidence type="ECO:0007829" key="9">
    <source>
        <dbReference type="PDB" id="4LAF"/>
    </source>
</evidence>
<comment type="function">
    <text evidence="3">Involved in the degradation of para-nitrophenol (PNP). Catalyzes the reduction of p-benzoquinone to hydroquinone.</text>
</comment>
<comment type="catalytic activity">
    <reaction evidence="3">
        <text>1,4-benzoquinone + NADPH + H(+) = hydroquinone + NADP(+)</text>
        <dbReference type="Rhea" id="RHEA:23488"/>
        <dbReference type="ChEBI" id="CHEBI:15378"/>
        <dbReference type="ChEBI" id="CHEBI:16509"/>
        <dbReference type="ChEBI" id="CHEBI:17594"/>
        <dbReference type="ChEBI" id="CHEBI:57783"/>
        <dbReference type="ChEBI" id="CHEBI:58349"/>
        <dbReference type="EC" id="1.6.5.6"/>
    </reaction>
</comment>
<comment type="cofactor">
    <cofactor evidence="3">
        <name>FMN</name>
        <dbReference type="ChEBI" id="CHEBI:58210"/>
    </cofactor>
    <text evidence="3">Binds 1 FMN per monomer.</text>
</comment>
<comment type="biophysicochemical properties">
    <kinetics>
        <KM evidence="3">6.7 uM for p-benzoquinone</KM>
        <KM evidence="3">181.6 uM for NADPH</KM>
    </kinetics>
</comment>
<comment type="pathway">
    <text>Xenobiotic degradation; 4-nitrophenol degradation.</text>
</comment>
<comment type="subunit">
    <text evidence="3">Homodimer.</text>
</comment>
<comment type="disruption phenotype">
    <text evidence="3">Cells lacking this gene are not completely unable to grow on PNP.</text>
</comment>
<comment type="similarity">
    <text evidence="6">Belongs to the WrbA family.</text>
</comment>
<protein>
    <recommendedName>
        <fullName evidence="5">p-benzoquinone reductase</fullName>
        <ecNumber evidence="3">1.6.5.6</ecNumber>
    </recommendedName>
    <alternativeName>
        <fullName>NAD(P)H dehydrogenase (quinone)</fullName>
    </alternativeName>
</protein>
<organism>
    <name type="scientific">Pseudomonas sp. (strain WBC-3)</name>
    <dbReference type="NCBI Taxonomy" id="165468"/>
    <lineage>
        <taxon>Bacteria</taxon>
        <taxon>Pseudomonadati</taxon>
        <taxon>Pseudomonadota</taxon>
        <taxon>Gammaproteobacteria</taxon>
        <taxon>Pseudomonadales</taxon>
        <taxon>Pseudomonadaceae</taxon>
        <taxon>Pseudomonas</taxon>
    </lineage>
</organism>
<gene>
    <name type="primary">pnpB</name>
</gene>
<keyword id="KW-0002">3D-structure</keyword>
<keyword id="KW-0285">Flavoprotein</keyword>
<keyword id="KW-0288">FMN</keyword>
<keyword id="KW-0521">NADP</keyword>
<keyword id="KW-0560">Oxidoreductase</keyword>
<accession>C1I202</accession>
<name>PNPB_PSEWB</name>
<sequence length="207" mass="22040">MPTKIQIVFYSSYGHIYKMAEAIAAGAREVGDVEVTLLQVPELMPEEVQVKSGIKGYRAAFGSIPYATPEVLAEADAIIFGTPTRFGNMCSQMRNFLDQTGGLWMSGGLIGKVGSVFTSTASQHGGQETTITSFHTTLLHHGMVIVGVPYSEPGLTNMTEISGGTPYGASTLAGADGSRQPSENELQIARFQGKHVATIAKRLANNK</sequence>
<reference key="1">
    <citation type="journal article" date="2009" name="J. Bacteriol.">
        <title>Identification and characterization of catabolic para-nitrophenol 4-monooxygenase and para-benzoquinone reductase from Pseudomonas sp. strain WBC-3.</title>
        <authorList>
            <person name="Zhang J.J."/>
            <person name="Liu H."/>
            <person name="Xiao Y."/>
            <person name="Zhang X.E."/>
            <person name="Zhou N.Y."/>
        </authorList>
    </citation>
    <scope>NUCLEOTIDE SEQUENCE [GENOMIC DNA]</scope>
    <scope>FUNCTION</scope>
    <scope>CATALYTIC ACTIVITY</scope>
    <scope>DISRUPTION PHENOTYPE</scope>
    <scope>BIOPHYSICOCHEMICAL PROPERTIES</scope>
    <scope>COFACTOR</scope>
    <scope>SUBUNIT</scope>
</reference>
<reference evidence="7" key="2">
    <citation type="submission" date="2013-06" db="PDB data bank">
        <title>Crystal structure of native PnpB.</title>
        <authorList>
            <person name="Su J."/>
            <person name="Zhang C."/>
            <person name="Li N."/>
            <person name="Gu L."/>
        </authorList>
    </citation>
    <scope>X-RAY CRYSTALLOGRAPHY (2.07 ANGSTROMS)</scope>
</reference>
<reference evidence="8" key="3">
    <citation type="submission" date="2013-06" db="PDB data bank">
        <title>Crystal structure of PnpB complex with FMN.</title>
        <authorList>
            <person name="Su J."/>
            <person name="Zhang C."/>
            <person name="Li N."/>
            <person name="Gu L."/>
        </authorList>
    </citation>
    <scope>X-RAY CRYSTALLOGRAPHY (1.76 ANGSTROMS) IN COMPLEX WITH FMN</scope>
</reference>
<proteinExistence type="evidence at protein level"/>
<feature type="chain" id="PRO_0000422667" description="p-benzoquinone reductase">
    <location>
        <begin position="1"/>
        <end position="207"/>
    </location>
</feature>
<feature type="domain" description="Flavodoxin-like" evidence="1">
    <location>
        <begin position="5"/>
        <end position="196"/>
    </location>
</feature>
<feature type="binding site" evidence="4">
    <location>
        <begin position="11"/>
        <end position="16"/>
    </location>
    <ligand>
        <name>FMN</name>
        <dbReference type="ChEBI" id="CHEBI:58210"/>
    </ligand>
</feature>
<feature type="binding site" evidence="2">
    <location>
        <position position="13"/>
    </location>
    <ligand>
        <name>NADP(+)</name>
        <dbReference type="ChEBI" id="CHEBI:58349"/>
    </ligand>
</feature>
<feature type="binding site" evidence="4">
    <location>
        <begin position="84"/>
        <end position="86"/>
    </location>
    <ligand>
        <name>FMN</name>
        <dbReference type="ChEBI" id="CHEBI:58210"/>
    </ligand>
</feature>
<feature type="binding site" evidence="4">
    <location>
        <begin position="119"/>
        <end position="125"/>
    </location>
    <ligand>
        <name>FMN</name>
        <dbReference type="ChEBI" id="CHEBI:58210"/>
    </ligand>
</feature>
<feature type="binding site" evidence="4">
    <location>
        <position position="140"/>
    </location>
    <ligand>
        <name>FMN</name>
        <dbReference type="ChEBI" id="CHEBI:58210"/>
    </ligand>
</feature>
<feature type="strand" evidence="9">
    <location>
        <begin position="3"/>
        <end position="9"/>
    </location>
</feature>
<feature type="strand" evidence="9">
    <location>
        <begin position="12"/>
        <end position="14"/>
    </location>
</feature>
<feature type="helix" evidence="9">
    <location>
        <begin position="15"/>
        <end position="28"/>
    </location>
</feature>
<feature type="strand" evidence="9">
    <location>
        <begin position="31"/>
        <end position="39"/>
    </location>
</feature>
<feature type="helix" evidence="9">
    <location>
        <begin position="46"/>
        <end position="52"/>
    </location>
</feature>
<feature type="helix" evidence="9">
    <location>
        <begin position="54"/>
        <end position="59"/>
    </location>
</feature>
<feature type="turn" evidence="9">
    <location>
        <begin position="60"/>
        <end position="63"/>
    </location>
</feature>
<feature type="helix" evidence="9">
    <location>
        <begin position="69"/>
        <end position="74"/>
    </location>
</feature>
<feature type="strand" evidence="9">
    <location>
        <begin position="76"/>
        <end position="85"/>
    </location>
</feature>
<feature type="helix" evidence="9">
    <location>
        <begin position="91"/>
        <end position="98"/>
    </location>
</feature>
<feature type="helix" evidence="9">
    <location>
        <begin position="101"/>
        <end position="105"/>
    </location>
</feature>
<feature type="turn" evidence="9">
    <location>
        <begin position="106"/>
        <end position="111"/>
    </location>
</feature>
<feature type="strand" evidence="9">
    <location>
        <begin position="113"/>
        <end position="122"/>
    </location>
</feature>
<feature type="helix" evidence="9">
    <location>
        <begin position="129"/>
        <end position="140"/>
    </location>
</feature>
<feature type="helix" evidence="9">
    <location>
        <begin position="153"/>
        <end position="156"/>
    </location>
</feature>
<feature type="strand" evidence="9">
    <location>
        <begin position="170"/>
        <end position="172"/>
    </location>
</feature>
<feature type="helix" evidence="9">
    <location>
        <begin position="183"/>
        <end position="204"/>
    </location>
</feature>
<dbReference type="EC" id="1.6.5.6" evidence="3"/>
<dbReference type="EMBL" id="EF577044">
    <property type="protein sequence ID" value="ABU50909.1"/>
    <property type="molecule type" value="Genomic_DNA"/>
</dbReference>
<dbReference type="PDB" id="4LA4">
    <property type="method" value="X-ray"/>
    <property type="resolution" value="2.07 A"/>
    <property type="chains" value="A/B=1-207"/>
</dbReference>
<dbReference type="PDB" id="4LAF">
    <property type="method" value="X-ray"/>
    <property type="resolution" value="1.76 A"/>
    <property type="chains" value="A/B/C/D=1-207"/>
</dbReference>
<dbReference type="PDBsum" id="4LA4"/>
<dbReference type="PDBsum" id="4LAF"/>
<dbReference type="SMR" id="C1I202"/>
<dbReference type="CAZy" id="AA6">
    <property type="family name" value="Auxiliary Activities 6"/>
</dbReference>
<dbReference type="KEGG" id="ag:ABU50909"/>
<dbReference type="BioCyc" id="MetaCyc:MONOMER-13026"/>
<dbReference type="BRENDA" id="1.6.5.6">
    <property type="organism ID" value="11433"/>
</dbReference>
<dbReference type="SABIO-RK" id="C1I202"/>
<dbReference type="UniPathway" id="UPA01030"/>
<dbReference type="EvolutionaryTrace" id="C1I202"/>
<dbReference type="GO" id="GO:0016020">
    <property type="term" value="C:membrane"/>
    <property type="evidence" value="ECO:0007669"/>
    <property type="project" value="TreeGrafter"/>
</dbReference>
<dbReference type="GO" id="GO:0050660">
    <property type="term" value="F:flavin adenine dinucleotide binding"/>
    <property type="evidence" value="ECO:0007669"/>
    <property type="project" value="UniProtKB-UniRule"/>
</dbReference>
<dbReference type="GO" id="GO:0010181">
    <property type="term" value="F:FMN binding"/>
    <property type="evidence" value="ECO:0007669"/>
    <property type="project" value="InterPro"/>
</dbReference>
<dbReference type="GO" id="GO:0051287">
    <property type="term" value="F:NAD binding"/>
    <property type="evidence" value="ECO:0007669"/>
    <property type="project" value="UniProtKB-UniRule"/>
</dbReference>
<dbReference type="GO" id="GO:0003955">
    <property type="term" value="F:NAD(P)H dehydrogenase (quinone) activity"/>
    <property type="evidence" value="ECO:0000314"/>
    <property type="project" value="UniProtKB"/>
</dbReference>
<dbReference type="GO" id="GO:0050661">
    <property type="term" value="F:NADP binding"/>
    <property type="evidence" value="ECO:0007669"/>
    <property type="project" value="UniProtKB-UniRule"/>
</dbReference>
<dbReference type="GO" id="GO:0018541">
    <property type="term" value="F:p-benzoquinone reductase (NADPH) activity"/>
    <property type="evidence" value="ECO:0007669"/>
    <property type="project" value="UniProtKB-EC"/>
</dbReference>
<dbReference type="GO" id="GO:0046196">
    <property type="term" value="P:4-nitrophenol catabolic process"/>
    <property type="evidence" value="ECO:0007669"/>
    <property type="project" value="UniProtKB-UniPathway"/>
</dbReference>
<dbReference type="GO" id="GO:0006091">
    <property type="term" value="P:generation of precursor metabolites and energy"/>
    <property type="evidence" value="ECO:0000314"/>
    <property type="project" value="UniProtKB"/>
</dbReference>
<dbReference type="FunFam" id="3.40.50.360:FF:000001">
    <property type="entry name" value="NAD(P)H dehydrogenase (Quinone) FQR1-like"/>
    <property type="match status" value="1"/>
</dbReference>
<dbReference type="Gene3D" id="3.40.50.360">
    <property type="match status" value="1"/>
</dbReference>
<dbReference type="HAMAP" id="MF_01017">
    <property type="entry name" value="NQOR"/>
    <property type="match status" value="1"/>
</dbReference>
<dbReference type="InterPro" id="IPR008254">
    <property type="entry name" value="Flavodoxin/NO_synth"/>
</dbReference>
<dbReference type="InterPro" id="IPR029039">
    <property type="entry name" value="Flavoprotein-like_sf"/>
</dbReference>
<dbReference type="InterPro" id="IPR010089">
    <property type="entry name" value="Flavoprotein_WrbA-like"/>
</dbReference>
<dbReference type="InterPro" id="IPR005025">
    <property type="entry name" value="FMN_Rdtase-like_dom"/>
</dbReference>
<dbReference type="InterPro" id="IPR037513">
    <property type="entry name" value="NQO"/>
</dbReference>
<dbReference type="NCBIfam" id="TIGR01755">
    <property type="entry name" value="flav_wrbA"/>
    <property type="match status" value="1"/>
</dbReference>
<dbReference type="NCBIfam" id="NF002999">
    <property type="entry name" value="PRK03767.1"/>
    <property type="match status" value="1"/>
</dbReference>
<dbReference type="PANTHER" id="PTHR30546">
    <property type="entry name" value="FLAVODOXIN-RELATED PROTEIN WRBA-RELATED"/>
    <property type="match status" value="1"/>
</dbReference>
<dbReference type="PANTHER" id="PTHR30546:SF23">
    <property type="entry name" value="FLAVOPROTEIN-LIKE PROTEIN YCP4-RELATED"/>
    <property type="match status" value="1"/>
</dbReference>
<dbReference type="Pfam" id="PF03358">
    <property type="entry name" value="FMN_red"/>
    <property type="match status" value="1"/>
</dbReference>
<dbReference type="SUPFAM" id="SSF52218">
    <property type="entry name" value="Flavoproteins"/>
    <property type="match status" value="1"/>
</dbReference>
<dbReference type="PROSITE" id="PS50902">
    <property type="entry name" value="FLAVODOXIN_LIKE"/>
    <property type="match status" value="1"/>
</dbReference>